<dbReference type="EMBL" id="AM933173">
    <property type="protein sequence ID" value="CAR36130.1"/>
    <property type="molecule type" value="Genomic_DNA"/>
</dbReference>
<dbReference type="RefSeq" id="WP_000622423.1">
    <property type="nucleotide sequence ID" value="NC_011274.1"/>
</dbReference>
<dbReference type="SMR" id="B5RHF7"/>
<dbReference type="KEGG" id="seg:SG0223"/>
<dbReference type="HOGENOM" id="CLU_073981_2_1_6"/>
<dbReference type="Proteomes" id="UP000008321">
    <property type="component" value="Chromosome"/>
</dbReference>
<dbReference type="GO" id="GO:0005829">
    <property type="term" value="C:cytosol"/>
    <property type="evidence" value="ECO:0007669"/>
    <property type="project" value="GOC"/>
</dbReference>
<dbReference type="GO" id="GO:0043023">
    <property type="term" value="F:ribosomal large subunit binding"/>
    <property type="evidence" value="ECO:0007669"/>
    <property type="project" value="TreeGrafter"/>
</dbReference>
<dbReference type="GO" id="GO:0002184">
    <property type="term" value="P:cytoplasmic translational termination"/>
    <property type="evidence" value="ECO:0007669"/>
    <property type="project" value="TreeGrafter"/>
</dbReference>
<dbReference type="CDD" id="cd00520">
    <property type="entry name" value="RRF"/>
    <property type="match status" value="1"/>
</dbReference>
<dbReference type="FunFam" id="1.10.132.20:FF:000001">
    <property type="entry name" value="Ribosome-recycling factor"/>
    <property type="match status" value="1"/>
</dbReference>
<dbReference type="FunFam" id="3.30.1360.40:FF:000001">
    <property type="entry name" value="Ribosome-recycling factor"/>
    <property type="match status" value="1"/>
</dbReference>
<dbReference type="Gene3D" id="3.30.1360.40">
    <property type="match status" value="1"/>
</dbReference>
<dbReference type="Gene3D" id="1.10.132.20">
    <property type="entry name" value="Ribosome-recycling factor"/>
    <property type="match status" value="1"/>
</dbReference>
<dbReference type="HAMAP" id="MF_00040">
    <property type="entry name" value="RRF"/>
    <property type="match status" value="1"/>
</dbReference>
<dbReference type="InterPro" id="IPR002661">
    <property type="entry name" value="Ribosome_recyc_fac"/>
</dbReference>
<dbReference type="InterPro" id="IPR023584">
    <property type="entry name" value="Ribosome_recyc_fac_dom"/>
</dbReference>
<dbReference type="InterPro" id="IPR036191">
    <property type="entry name" value="RRF_sf"/>
</dbReference>
<dbReference type="NCBIfam" id="TIGR00496">
    <property type="entry name" value="frr"/>
    <property type="match status" value="1"/>
</dbReference>
<dbReference type="PANTHER" id="PTHR20982:SF3">
    <property type="entry name" value="MITOCHONDRIAL RIBOSOME RECYCLING FACTOR PSEUDO 1"/>
    <property type="match status" value="1"/>
</dbReference>
<dbReference type="PANTHER" id="PTHR20982">
    <property type="entry name" value="RIBOSOME RECYCLING FACTOR"/>
    <property type="match status" value="1"/>
</dbReference>
<dbReference type="Pfam" id="PF01765">
    <property type="entry name" value="RRF"/>
    <property type="match status" value="1"/>
</dbReference>
<dbReference type="SUPFAM" id="SSF55194">
    <property type="entry name" value="Ribosome recycling factor, RRF"/>
    <property type="match status" value="1"/>
</dbReference>
<organism>
    <name type="scientific">Salmonella gallinarum (strain 287/91 / NCTC 13346)</name>
    <dbReference type="NCBI Taxonomy" id="550538"/>
    <lineage>
        <taxon>Bacteria</taxon>
        <taxon>Pseudomonadati</taxon>
        <taxon>Pseudomonadota</taxon>
        <taxon>Gammaproteobacteria</taxon>
        <taxon>Enterobacterales</taxon>
        <taxon>Enterobacteriaceae</taxon>
        <taxon>Salmonella</taxon>
    </lineage>
</organism>
<name>RRF_SALG2</name>
<protein>
    <recommendedName>
        <fullName evidence="1">Ribosome-recycling factor</fullName>
        <shortName evidence="1">RRF</shortName>
    </recommendedName>
    <alternativeName>
        <fullName evidence="1">Ribosome-releasing factor</fullName>
    </alternativeName>
</protein>
<sequence length="185" mass="20556">MISDIRKDAEVRMEKCVEAFKTQISKVRTGRASPSLLDGIVVEYYGTPTPLRQLASVTVEDSRTLKINVFDRSMGPAVEKAIMASDLGLNPSSAGTDIRVPLPPLTEERRKDLTKIVRGEAEQARVAVRNVRRDANDKVKALLKDKAISEDDDRRSQEEVQKMTDAAIKKVDAALADKEAELMQF</sequence>
<feature type="chain" id="PRO_1000090781" description="Ribosome-recycling factor">
    <location>
        <begin position="1"/>
        <end position="185"/>
    </location>
</feature>
<proteinExistence type="inferred from homology"/>
<comment type="function">
    <text evidence="1">Responsible for the release of ribosomes from messenger RNA at the termination of protein biosynthesis. May increase the efficiency of translation by recycling ribosomes from one round of translation to another.</text>
</comment>
<comment type="subcellular location">
    <subcellularLocation>
        <location evidence="1">Cytoplasm</location>
    </subcellularLocation>
</comment>
<comment type="similarity">
    <text evidence="1">Belongs to the RRF family.</text>
</comment>
<accession>B5RHF7</accession>
<reference key="1">
    <citation type="journal article" date="2008" name="Genome Res.">
        <title>Comparative genome analysis of Salmonella enteritidis PT4 and Salmonella gallinarum 287/91 provides insights into evolutionary and host adaptation pathways.</title>
        <authorList>
            <person name="Thomson N.R."/>
            <person name="Clayton D.J."/>
            <person name="Windhorst D."/>
            <person name="Vernikos G."/>
            <person name="Davidson S."/>
            <person name="Churcher C."/>
            <person name="Quail M.A."/>
            <person name="Stevens M."/>
            <person name="Jones M.A."/>
            <person name="Watson M."/>
            <person name="Barron A."/>
            <person name="Layton A."/>
            <person name="Pickard D."/>
            <person name="Kingsley R.A."/>
            <person name="Bignell A."/>
            <person name="Clark L."/>
            <person name="Harris B."/>
            <person name="Ormond D."/>
            <person name="Abdellah Z."/>
            <person name="Brooks K."/>
            <person name="Cherevach I."/>
            <person name="Chillingworth T."/>
            <person name="Woodward J."/>
            <person name="Norberczak H."/>
            <person name="Lord A."/>
            <person name="Arrowsmith C."/>
            <person name="Jagels K."/>
            <person name="Moule S."/>
            <person name="Mungall K."/>
            <person name="Saunders M."/>
            <person name="Whitehead S."/>
            <person name="Chabalgoity J.A."/>
            <person name="Maskell D."/>
            <person name="Humphreys T."/>
            <person name="Roberts M."/>
            <person name="Barrow P.A."/>
            <person name="Dougan G."/>
            <person name="Parkhill J."/>
        </authorList>
    </citation>
    <scope>NUCLEOTIDE SEQUENCE [LARGE SCALE GENOMIC DNA]</scope>
    <source>
        <strain>287/91 / NCTC 13346</strain>
    </source>
</reference>
<keyword id="KW-0963">Cytoplasm</keyword>
<keyword id="KW-0648">Protein biosynthesis</keyword>
<evidence type="ECO:0000255" key="1">
    <source>
        <dbReference type="HAMAP-Rule" id="MF_00040"/>
    </source>
</evidence>
<gene>
    <name evidence="1" type="primary">frr</name>
    <name type="ordered locus">SG0223</name>
</gene>